<keyword id="KW-0030">Aminoacyl-tRNA synthetase</keyword>
<keyword id="KW-0067">ATP-binding</keyword>
<keyword id="KW-0963">Cytoplasm</keyword>
<keyword id="KW-0436">Ligase</keyword>
<keyword id="KW-0547">Nucleotide-binding</keyword>
<keyword id="KW-0648">Protein biosynthesis</keyword>
<dbReference type="EC" id="6.1.1.14" evidence="1"/>
<dbReference type="EMBL" id="CP000539">
    <property type="protein sequence ID" value="ABM40778.1"/>
    <property type="molecule type" value="Genomic_DNA"/>
</dbReference>
<dbReference type="SMR" id="A1W3F3"/>
<dbReference type="STRING" id="232721.Ajs_0528"/>
<dbReference type="KEGG" id="ajs:Ajs_0528"/>
<dbReference type="eggNOG" id="COG0751">
    <property type="taxonomic scope" value="Bacteria"/>
</dbReference>
<dbReference type="HOGENOM" id="CLU_007220_2_2_4"/>
<dbReference type="Proteomes" id="UP000000645">
    <property type="component" value="Chromosome"/>
</dbReference>
<dbReference type="GO" id="GO:0005829">
    <property type="term" value="C:cytosol"/>
    <property type="evidence" value="ECO:0007669"/>
    <property type="project" value="TreeGrafter"/>
</dbReference>
<dbReference type="GO" id="GO:0004814">
    <property type="term" value="F:arginine-tRNA ligase activity"/>
    <property type="evidence" value="ECO:0007669"/>
    <property type="project" value="InterPro"/>
</dbReference>
<dbReference type="GO" id="GO:0005524">
    <property type="term" value="F:ATP binding"/>
    <property type="evidence" value="ECO:0007669"/>
    <property type="project" value="UniProtKB-UniRule"/>
</dbReference>
<dbReference type="GO" id="GO:0004820">
    <property type="term" value="F:glycine-tRNA ligase activity"/>
    <property type="evidence" value="ECO:0007669"/>
    <property type="project" value="UniProtKB-UniRule"/>
</dbReference>
<dbReference type="GO" id="GO:0006420">
    <property type="term" value="P:arginyl-tRNA aminoacylation"/>
    <property type="evidence" value="ECO:0007669"/>
    <property type="project" value="InterPro"/>
</dbReference>
<dbReference type="GO" id="GO:0006426">
    <property type="term" value="P:glycyl-tRNA aminoacylation"/>
    <property type="evidence" value="ECO:0007669"/>
    <property type="project" value="UniProtKB-UniRule"/>
</dbReference>
<dbReference type="HAMAP" id="MF_00255">
    <property type="entry name" value="Gly_tRNA_synth_beta"/>
    <property type="match status" value="1"/>
</dbReference>
<dbReference type="InterPro" id="IPR008909">
    <property type="entry name" value="DALR_anticod-bd"/>
</dbReference>
<dbReference type="InterPro" id="IPR015944">
    <property type="entry name" value="Gly-tRNA-synth_bsu"/>
</dbReference>
<dbReference type="InterPro" id="IPR006194">
    <property type="entry name" value="Gly-tRNA-synth_heterodimer"/>
</dbReference>
<dbReference type="NCBIfam" id="TIGR00211">
    <property type="entry name" value="glyS"/>
    <property type="match status" value="1"/>
</dbReference>
<dbReference type="PANTHER" id="PTHR30075:SF2">
    <property type="entry name" value="GLYCINE--TRNA LIGASE, CHLOROPLASTIC_MITOCHONDRIAL 2"/>
    <property type="match status" value="1"/>
</dbReference>
<dbReference type="PANTHER" id="PTHR30075">
    <property type="entry name" value="GLYCYL-TRNA SYNTHETASE"/>
    <property type="match status" value="1"/>
</dbReference>
<dbReference type="Pfam" id="PF05746">
    <property type="entry name" value="DALR_1"/>
    <property type="match status" value="1"/>
</dbReference>
<dbReference type="Pfam" id="PF02092">
    <property type="entry name" value="tRNA_synt_2f"/>
    <property type="match status" value="1"/>
</dbReference>
<dbReference type="PRINTS" id="PR01045">
    <property type="entry name" value="TRNASYNTHGB"/>
</dbReference>
<dbReference type="SUPFAM" id="SSF109604">
    <property type="entry name" value="HD-domain/PDEase-like"/>
    <property type="match status" value="1"/>
</dbReference>
<dbReference type="PROSITE" id="PS50861">
    <property type="entry name" value="AA_TRNA_LIGASE_II_GLYAB"/>
    <property type="match status" value="1"/>
</dbReference>
<sequence>MNHQNLLVELFVEELPPKALQKLGDAFAGVLLEQLQAQGLTSAHSQLTAFASPRRLAAHITEVLPAAADKAVSQKLMPVAVGLDASGQPTPALLKKLTALGADAASVPQLKRVHDGKAEVLFFESMAKGALLADGLQKALDEAIAKLPIPKVMRYQLQDGWTSVHFVRPAHGLVALHGTQVLVGVQALGLTAGNTTHGHRFEASVDPVVIQSADSYAEQLRSEGAVIASFAERRAEIARQLQAAADRVGGGVRPIEDAALLDEVTALVERPNVLVCEFEKEFLAVPQECLILTMKANQKYFPLLDAEGKLTHQFLVVSNISPQDASAVIQGNERVVRPRLADAKFFFDQDRKKTLVSRVDQLAKVVYHNKLGTQGERVERVRHIAKAIATQLFTALAQGNAALDSQEGEIAQDYLLTCVDNAALLAKTDLVTDMVGEFPELQGIMGGYYAVSDGLPDEVAHAIEDHYKPRFAGDALPRENVGVVVALADKLETLVGMFGIGNLPTGDRDPFALRRHALGVIRMLVEKELPLDLDALLASAVPAFGDKIEDTSAQLADFIYDRLAGSLREQGYSAQEVDAVIALRPQRLALVPRQLEAVRAFTQLEEAPALAAANKRVTNILKKAGEVDPHVNEELLQEPAEKDLYAALQRFVPEANAQFDSGDYTASLQTLAVLRAPVDAFFDDVMVNAEELALRLNRQGLLKKLHMAMNRVADLSRLAV</sequence>
<proteinExistence type="inferred from homology"/>
<comment type="catalytic activity">
    <reaction evidence="1">
        <text>tRNA(Gly) + glycine + ATP = glycyl-tRNA(Gly) + AMP + diphosphate</text>
        <dbReference type="Rhea" id="RHEA:16013"/>
        <dbReference type="Rhea" id="RHEA-COMP:9664"/>
        <dbReference type="Rhea" id="RHEA-COMP:9683"/>
        <dbReference type="ChEBI" id="CHEBI:30616"/>
        <dbReference type="ChEBI" id="CHEBI:33019"/>
        <dbReference type="ChEBI" id="CHEBI:57305"/>
        <dbReference type="ChEBI" id="CHEBI:78442"/>
        <dbReference type="ChEBI" id="CHEBI:78522"/>
        <dbReference type="ChEBI" id="CHEBI:456215"/>
        <dbReference type="EC" id="6.1.1.14"/>
    </reaction>
</comment>
<comment type="subunit">
    <text evidence="1">Tetramer of two alpha and two beta subunits.</text>
</comment>
<comment type="subcellular location">
    <subcellularLocation>
        <location evidence="1">Cytoplasm</location>
    </subcellularLocation>
</comment>
<comment type="similarity">
    <text evidence="1">Belongs to the class-II aminoacyl-tRNA synthetase family.</text>
</comment>
<reference key="1">
    <citation type="submission" date="2006-12" db="EMBL/GenBank/DDBJ databases">
        <title>Complete sequence of chromosome 1 of Acidovorax sp. JS42.</title>
        <authorList>
            <person name="Copeland A."/>
            <person name="Lucas S."/>
            <person name="Lapidus A."/>
            <person name="Barry K."/>
            <person name="Detter J.C."/>
            <person name="Glavina del Rio T."/>
            <person name="Dalin E."/>
            <person name="Tice H."/>
            <person name="Pitluck S."/>
            <person name="Chertkov O."/>
            <person name="Brettin T."/>
            <person name="Bruce D."/>
            <person name="Han C."/>
            <person name="Tapia R."/>
            <person name="Gilna P."/>
            <person name="Schmutz J."/>
            <person name="Larimer F."/>
            <person name="Land M."/>
            <person name="Hauser L."/>
            <person name="Kyrpides N."/>
            <person name="Kim E."/>
            <person name="Stahl D."/>
            <person name="Richardson P."/>
        </authorList>
    </citation>
    <scope>NUCLEOTIDE SEQUENCE [LARGE SCALE GENOMIC DNA]</scope>
    <source>
        <strain>JS42</strain>
    </source>
</reference>
<feature type="chain" id="PRO_1000101258" description="Glycine--tRNA ligase beta subunit">
    <location>
        <begin position="1"/>
        <end position="720"/>
    </location>
</feature>
<protein>
    <recommendedName>
        <fullName evidence="1">Glycine--tRNA ligase beta subunit</fullName>
        <ecNumber evidence="1">6.1.1.14</ecNumber>
    </recommendedName>
    <alternativeName>
        <fullName evidence="1">Glycyl-tRNA synthetase beta subunit</fullName>
        <shortName evidence="1">GlyRS</shortName>
    </alternativeName>
</protein>
<name>SYGB_ACISJ</name>
<organism>
    <name type="scientific">Acidovorax sp. (strain JS42)</name>
    <dbReference type="NCBI Taxonomy" id="232721"/>
    <lineage>
        <taxon>Bacteria</taxon>
        <taxon>Pseudomonadati</taxon>
        <taxon>Pseudomonadota</taxon>
        <taxon>Betaproteobacteria</taxon>
        <taxon>Burkholderiales</taxon>
        <taxon>Comamonadaceae</taxon>
        <taxon>Acidovorax</taxon>
    </lineage>
</organism>
<evidence type="ECO:0000255" key="1">
    <source>
        <dbReference type="HAMAP-Rule" id="MF_00255"/>
    </source>
</evidence>
<accession>A1W3F3</accession>
<gene>
    <name evidence="1" type="primary">glyS</name>
    <name type="ordered locus">Ajs_0528</name>
</gene>